<sequence>MIGNWNYGTGRRKSSVARVFIKKGSGQITVNGKPVEQYFGRQTSIMIVKQPLFLTNNVEAFDIKVNVHGGGESGQAGAVRHGVTRALIDYDAALKSELSRAGFVTRDAREVERKKVGLHGARRRKQFSKR</sequence>
<dbReference type="EMBL" id="CP000555">
    <property type="protein sequence ID" value="ABM96109.1"/>
    <property type="molecule type" value="Genomic_DNA"/>
</dbReference>
<dbReference type="RefSeq" id="WP_011830732.1">
    <property type="nucleotide sequence ID" value="NC_008825.1"/>
</dbReference>
<dbReference type="SMR" id="A2SKM0"/>
<dbReference type="STRING" id="420662.Mpe_A3156"/>
<dbReference type="KEGG" id="mpt:Mpe_A3156"/>
<dbReference type="eggNOG" id="COG0103">
    <property type="taxonomic scope" value="Bacteria"/>
</dbReference>
<dbReference type="HOGENOM" id="CLU_046483_2_1_4"/>
<dbReference type="Proteomes" id="UP000000366">
    <property type="component" value="Chromosome"/>
</dbReference>
<dbReference type="GO" id="GO:0022627">
    <property type="term" value="C:cytosolic small ribosomal subunit"/>
    <property type="evidence" value="ECO:0007669"/>
    <property type="project" value="TreeGrafter"/>
</dbReference>
<dbReference type="GO" id="GO:0003723">
    <property type="term" value="F:RNA binding"/>
    <property type="evidence" value="ECO:0007669"/>
    <property type="project" value="TreeGrafter"/>
</dbReference>
<dbReference type="GO" id="GO:0003735">
    <property type="term" value="F:structural constituent of ribosome"/>
    <property type="evidence" value="ECO:0007669"/>
    <property type="project" value="InterPro"/>
</dbReference>
<dbReference type="GO" id="GO:0006412">
    <property type="term" value="P:translation"/>
    <property type="evidence" value="ECO:0007669"/>
    <property type="project" value="UniProtKB-UniRule"/>
</dbReference>
<dbReference type="FunFam" id="3.30.230.10:FF:000001">
    <property type="entry name" value="30S ribosomal protein S9"/>
    <property type="match status" value="1"/>
</dbReference>
<dbReference type="Gene3D" id="3.30.230.10">
    <property type="match status" value="1"/>
</dbReference>
<dbReference type="HAMAP" id="MF_00532_B">
    <property type="entry name" value="Ribosomal_uS9_B"/>
    <property type="match status" value="1"/>
</dbReference>
<dbReference type="InterPro" id="IPR020568">
    <property type="entry name" value="Ribosomal_Su5_D2-typ_SF"/>
</dbReference>
<dbReference type="InterPro" id="IPR000754">
    <property type="entry name" value="Ribosomal_uS9"/>
</dbReference>
<dbReference type="InterPro" id="IPR023035">
    <property type="entry name" value="Ribosomal_uS9_bac/plastid"/>
</dbReference>
<dbReference type="InterPro" id="IPR020574">
    <property type="entry name" value="Ribosomal_uS9_CS"/>
</dbReference>
<dbReference type="InterPro" id="IPR014721">
    <property type="entry name" value="Ribsml_uS5_D2-typ_fold_subgr"/>
</dbReference>
<dbReference type="NCBIfam" id="NF001099">
    <property type="entry name" value="PRK00132.1"/>
    <property type="match status" value="1"/>
</dbReference>
<dbReference type="PANTHER" id="PTHR21569">
    <property type="entry name" value="RIBOSOMAL PROTEIN S9"/>
    <property type="match status" value="1"/>
</dbReference>
<dbReference type="PANTHER" id="PTHR21569:SF1">
    <property type="entry name" value="SMALL RIBOSOMAL SUBUNIT PROTEIN US9M"/>
    <property type="match status" value="1"/>
</dbReference>
<dbReference type="Pfam" id="PF00380">
    <property type="entry name" value="Ribosomal_S9"/>
    <property type="match status" value="1"/>
</dbReference>
<dbReference type="SUPFAM" id="SSF54211">
    <property type="entry name" value="Ribosomal protein S5 domain 2-like"/>
    <property type="match status" value="1"/>
</dbReference>
<dbReference type="PROSITE" id="PS00360">
    <property type="entry name" value="RIBOSOMAL_S9"/>
    <property type="match status" value="1"/>
</dbReference>
<organism>
    <name type="scientific">Methylibium petroleiphilum (strain ATCC BAA-1232 / LMG 22953 / PM1)</name>
    <dbReference type="NCBI Taxonomy" id="420662"/>
    <lineage>
        <taxon>Bacteria</taxon>
        <taxon>Pseudomonadati</taxon>
        <taxon>Pseudomonadota</taxon>
        <taxon>Betaproteobacteria</taxon>
        <taxon>Burkholderiales</taxon>
        <taxon>Sphaerotilaceae</taxon>
        <taxon>Methylibium</taxon>
    </lineage>
</organism>
<gene>
    <name evidence="1" type="primary">rpsI</name>
    <name type="ordered locus">Mpe_A3156</name>
</gene>
<comment type="similarity">
    <text evidence="1">Belongs to the universal ribosomal protein uS9 family.</text>
</comment>
<reference key="1">
    <citation type="journal article" date="2007" name="J. Bacteriol.">
        <title>Whole-genome analysis of the methyl tert-butyl ether-degrading beta-proteobacterium Methylibium petroleiphilum PM1.</title>
        <authorList>
            <person name="Kane S.R."/>
            <person name="Chakicherla A.Y."/>
            <person name="Chain P.S.G."/>
            <person name="Schmidt R."/>
            <person name="Shin M.W."/>
            <person name="Legler T.C."/>
            <person name="Scow K.M."/>
            <person name="Larimer F.W."/>
            <person name="Lucas S.M."/>
            <person name="Richardson P.M."/>
            <person name="Hristova K.R."/>
        </authorList>
    </citation>
    <scope>NUCLEOTIDE SEQUENCE [LARGE SCALE GENOMIC DNA]</scope>
    <source>
        <strain>ATCC BAA-1232 / LMG 22953 / PM1</strain>
    </source>
</reference>
<name>RS9_METPP</name>
<accession>A2SKM0</accession>
<proteinExistence type="inferred from homology"/>
<feature type="chain" id="PRO_1000051252" description="Small ribosomal subunit protein uS9">
    <location>
        <begin position="1"/>
        <end position="130"/>
    </location>
</feature>
<protein>
    <recommendedName>
        <fullName evidence="1">Small ribosomal subunit protein uS9</fullName>
    </recommendedName>
    <alternativeName>
        <fullName evidence="2">30S ribosomal protein S9</fullName>
    </alternativeName>
</protein>
<evidence type="ECO:0000255" key="1">
    <source>
        <dbReference type="HAMAP-Rule" id="MF_00532"/>
    </source>
</evidence>
<evidence type="ECO:0000305" key="2"/>
<keyword id="KW-1185">Reference proteome</keyword>
<keyword id="KW-0687">Ribonucleoprotein</keyword>
<keyword id="KW-0689">Ribosomal protein</keyword>